<evidence type="ECO:0000255" key="1">
    <source>
        <dbReference type="HAMAP-Rule" id="MF_00523"/>
    </source>
</evidence>
<accession>A5GKW4</accession>
<sequence>MRFSQLIAVLKNGDAGVLSTSEGRDPELRGAASLERATADQLSFLEKGNALVGSLESSEAGAVLIPDQQELRELAERLQLAWAVCGDPRLAFAEALEQLHPKPSPQAGIHASAVIADRVQLGAGVSIGARVCIGDDTRIGPRTVIHPGVVIYGNVDIGEGCELHANAVLHPGSRIGDRCVVHSNAVVGSEGFGFVPTAKGWRKMPQTGLVVLEDGVEVGCGSTIDRPSVGETRIGSGTKIDNLVQIGHGVVTGRGCALASQVGIAGGAQLGHGVILAGQVGVANRAVIGDRAIASSKSGIHGEVAAGEVVSGYPAIPNRLWLRCSAAFSKLPEMAKQLRELKKQVSSEATGGSIEADQ</sequence>
<organism>
    <name type="scientific">Synechococcus sp. (strain WH7803)</name>
    <dbReference type="NCBI Taxonomy" id="32051"/>
    <lineage>
        <taxon>Bacteria</taxon>
        <taxon>Bacillati</taxon>
        <taxon>Cyanobacteriota</taxon>
        <taxon>Cyanophyceae</taxon>
        <taxon>Synechococcales</taxon>
        <taxon>Synechococcaceae</taxon>
        <taxon>Synechococcus</taxon>
    </lineage>
</organism>
<protein>
    <recommendedName>
        <fullName evidence="1">UDP-3-O-acylglucosamine N-acyltransferase</fullName>
        <ecNumber evidence="1">2.3.1.191</ecNumber>
    </recommendedName>
</protein>
<name>LPXD_SYNPW</name>
<comment type="function">
    <text evidence="1">Catalyzes the N-acylation of UDP-3-O-acylglucosamine using 3-hydroxyacyl-ACP as the acyl donor. Is involved in the biosynthesis of lipid A, a phosphorylated glycolipid that anchors the lipopolysaccharide to the outer membrane of the cell.</text>
</comment>
<comment type="catalytic activity">
    <reaction evidence="1">
        <text>a UDP-3-O-[(3R)-3-hydroxyacyl]-alpha-D-glucosamine + a (3R)-hydroxyacyl-[ACP] = a UDP-2-N,3-O-bis[(3R)-3-hydroxyacyl]-alpha-D-glucosamine + holo-[ACP] + H(+)</text>
        <dbReference type="Rhea" id="RHEA:53836"/>
        <dbReference type="Rhea" id="RHEA-COMP:9685"/>
        <dbReference type="Rhea" id="RHEA-COMP:9945"/>
        <dbReference type="ChEBI" id="CHEBI:15378"/>
        <dbReference type="ChEBI" id="CHEBI:64479"/>
        <dbReference type="ChEBI" id="CHEBI:78827"/>
        <dbReference type="ChEBI" id="CHEBI:137740"/>
        <dbReference type="ChEBI" id="CHEBI:137748"/>
        <dbReference type="EC" id="2.3.1.191"/>
    </reaction>
</comment>
<comment type="pathway">
    <text evidence="1">Bacterial outer membrane biogenesis; LPS lipid A biosynthesis.</text>
</comment>
<comment type="subunit">
    <text evidence="1">Homotrimer.</text>
</comment>
<comment type="similarity">
    <text evidence="1">Belongs to the transferase hexapeptide repeat family. LpxD subfamily.</text>
</comment>
<dbReference type="EC" id="2.3.1.191" evidence="1"/>
<dbReference type="EMBL" id="CT971583">
    <property type="protein sequence ID" value="CAK23579.1"/>
    <property type="molecule type" value="Genomic_DNA"/>
</dbReference>
<dbReference type="SMR" id="A5GKW4"/>
<dbReference type="STRING" id="32051.SynWH7803_1153"/>
<dbReference type="KEGG" id="syx:SynWH7803_1153"/>
<dbReference type="eggNOG" id="COG1044">
    <property type="taxonomic scope" value="Bacteria"/>
</dbReference>
<dbReference type="HOGENOM" id="CLU_049865_0_0_3"/>
<dbReference type="OrthoDB" id="9784739at2"/>
<dbReference type="UniPathway" id="UPA00973"/>
<dbReference type="Proteomes" id="UP000001566">
    <property type="component" value="Chromosome"/>
</dbReference>
<dbReference type="GO" id="GO:0031470">
    <property type="term" value="C:carboxysome"/>
    <property type="evidence" value="ECO:0007669"/>
    <property type="project" value="UniProtKB-ARBA"/>
</dbReference>
<dbReference type="GO" id="GO:0016020">
    <property type="term" value="C:membrane"/>
    <property type="evidence" value="ECO:0007669"/>
    <property type="project" value="GOC"/>
</dbReference>
<dbReference type="GO" id="GO:0016410">
    <property type="term" value="F:N-acyltransferase activity"/>
    <property type="evidence" value="ECO:0007669"/>
    <property type="project" value="InterPro"/>
</dbReference>
<dbReference type="GO" id="GO:0043886">
    <property type="term" value="F:structural constituent of carboxysome shell"/>
    <property type="evidence" value="ECO:0007669"/>
    <property type="project" value="UniProtKB-ARBA"/>
</dbReference>
<dbReference type="GO" id="GO:0009245">
    <property type="term" value="P:lipid A biosynthetic process"/>
    <property type="evidence" value="ECO:0007669"/>
    <property type="project" value="UniProtKB-UniRule"/>
</dbReference>
<dbReference type="CDD" id="cd03352">
    <property type="entry name" value="LbH_LpxD"/>
    <property type="match status" value="1"/>
</dbReference>
<dbReference type="Gene3D" id="2.160.10.10">
    <property type="entry name" value="Hexapeptide repeat proteins"/>
    <property type="match status" value="1"/>
</dbReference>
<dbReference type="Gene3D" id="3.40.1390.10">
    <property type="entry name" value="MurE/MurF, N-terminal domain"/>
    <property type="match status" value="1"/>
</dbReference>
<dbReference type="HAMAP" id="MF_00523">
    <property type="entry name" value="LpxD"/>
    <property type="match status" value="1"/>
</dbReference>
<dbReference type="InterPro" id="IPR001451">
    <property type="entry name" value="Hexapep"/>
</dbReference>
<dbReference type="InterPro" id="IPR018357">
    <property type="entry name" value="Hexapep_transf_CS"/>
</dbReference>
<dbReference type="InterPro" id="IPR007691">
    <property type="entry name" value="LpxD"/>
</dbReference>
<dbReference type="InterPro" id="IPR011004">
    <property type="entry name" value="Trimer_LpxA-like_sf"/>
</dbReference>
<dbReference type="InterPro" id="IPR020573">
    <property type="entry name" value="UDP_GlcNAc_AcTrfase_non-rep"/>
</dbReference>
<dbReference type="NCBIfam" id="TIGR01853">
    <property type="entry name" value="lipid_A_lpxD"/>
    <property type="match status" value="1"/>
</dbReference>
<dbReference type="NCBIfam" id="NF002060">
    <property type="entry name" value="PRK00892.1"/>
    <property type="match status" value="1"/>
</dbReference>
<dbReference type="PANTHER" id="PTHR43378">
    <property type="entry name" value="UDP-3-O-ACYLGLUCOSAMINE N-ACYLTRANSFERASE"/>
    <property type="match status" value="1"/>
</dbReference>
<dbReference type="PANTHER" id="PTHR43378:SF2">
    <property type="entry name" value="UDP-3-O-ACYLGLUCOSAMINE N-ACYLTRANSFERASE 1, MITOCHONDRIAL-RELATED"/>
    <property type="match status" value="1"/>
</dbReference>
<dbReference type="Pfam" id="PF00132">
    <property type="entry name" value="Hexapep"/>
    <property type="match status" value="1"/>
</dbReference>
<dbReference type="Pfam" id="PF04613">
    <property type="entry name" value="LpxD"/>
    <property type="match status" value="1"/>
</dbReference>
<dbReference type="SUPFAM" id="SSF51161">
    <property type="entry name" value="Trimeric LpxA-like enzymes"/>
    <property type="match status" value="1"/>
</dbReference>
<dbReference type="PROSITE" id="PS00101">
    <property type="entry name" value="HEXAPEP_TRANSFERASES"/>
    <property type="match status" value="1"/>
</dbReference>
<keyword id="KW-0012">Acyltransferase</keyword>
<keyword id="KW-0441">Lipid A biosynthesis</keyword>
<keyword id="KW-0444">Lipid biosynthesis</keyword>
<keyword id="KW-0443">Lipid metabolism</keyword>
<keyword id="KW-1185">Reference proteome</keyword>
<keyword id="KW-0677">Repeat</keyword>
<keyword id="KW-0808">Transferase</keyword>
<gene>
    <name evidence="1" type="primary">lpxD</name>
    <name type="ordered locus">SynWH7803_1153</name>
</gene>
<reference key="1">
    <citation type="submission" date="2006-05" db="EMBL/GenBank/DDBJ databases">
        <authorList>
            <consortium name="Genoscope"/>
        </authorList>
    </citation>
    <scope>NUCLEOTIDE SEQUENCE [LARGE SCALE GENOMIC DNA]</scope>
    <source>
        <strain>WH7803</strain>
    </source>
</reference>
<proteinExistence type="inferred from homology"/>
<feature type="chain" id="PRO_1000050963" description="UDP-3-O-acylglucosamine N-acyltransferase">
    <location>
        <begin position="1"/>
        <end position="358"/>
    </location>
</feature>
<feature type="active site" description="Proton acceptor" evidence="1">
    <location>
        <position position="248"/>
    </location>
</feature>